<sequence length="273" mass="28771">MHDANIRVAIAGAGGRMGRQLIQAALALEGVQLGAALEREGSSLLGSDAGELAGAGKTGVTVQSSLDAIKDDFDVFIDFTRPEGTLNHLAFCRQHGKGMVIGTTGFDEAGKQAIRDAAADIAIVFAANFSVGVNVMLKLLEKAAKVMGDYTDIEIIEAHHRHKVDAPSGTALAMGEAIAHALDKDLKDCAVYSREGHTGERVPGTIGFATVRAGDIVGEHTAMFADIGERLEITHKASSRMTFANGAVRSALWLSGKESGLFDMRDVLDLNNL</sequence>
<protein>
    <recommendedName>
        <fullName evidence="1">4-hydroxy-tetrahydrodipicolinate reductase</fullName>
        <shortName evidence="1">HTPA reductase</shortName>
        <ecNumber evidence="1">1.17.1.8</ecNumber>
    </recommendedName>
</protein>
<comment type="function">
    <text evidence="1">Catalyzes the conversion of 4-hydroxy-tetrahydrodipicolinate (HTPA) to tetrahydrodipicolinate.</text>
</comment>
<comment type="catalytic activity">
    <reaction evidence="1">
        <text>(S)-2,3,4,5-tetrahydrodipicolinate + NAD(+) + H2O = (2S,4S)-4-hydroxy-2,3,4,5-tetrahydrodipicolinate + NADH + H(+)</text>
        <dbReference type="Rhea" id="RHEA:35323"/>
        <dbReference type="ChEBI" id="CHEBI:15377"/>
        <dbReference type="ChEBI" id="CHEBI:15378"/>
        <dbReference type="ChEBI" id="CHEBI:16845"/>
        <dbReference type="ChEBI" id="CHEBI:57540"/>
        <dbReference type="ChEBI" id="CHEBI:57945"/>
        <dbReference type="ChEBI" id="CHEBI:67139"/>
        <dbReference type="EC" id="1.17.1.8"/>
    </reaction>
</comment>
<comment type="catalytic activity">
    <reaction evidence="1">
        <text>(S)-2,3,4,5-tetrahydrodipicolinate + NADP(+) + H2O = (2S,4S)-4-hydroxy-2,3,4,5-tetrahydrodipicolinate + NADPH + H(+)</text>
        <dbReference type="Rhea" id="RHEA:35331"/>
        <dbReference type="ChEBI" id="CHEBI:15377"/>
        <dbReference type="ChEBI" id="CHEBI:15378"/>
        <dbReference type="ChEBI" id="CHEBI:16845"/>
        <dbReference type="ChEBI" id="CHEBI:57783"/>
        <dbReference type="ChEBI" id="CHEBI:58349"/>
        <dbReference type="ChEBI" id="CHEBI:67139"/>
        <dbReference type="EC" id="1.17.1.8"/>
    </reaction>
</comment>
<comment type="pathway">
    <text evidence="1">Amino-acid biosynthesis; L-lysine biosynthesis via DAP pathway; (S)-tetrahydrodipicolinate from L-aspartate: step 4/4.</text>
</comment>
<comment type="subunit">
    <text evidence="1">Homotetramer.</text>
</comment>
<comment type="subcellular location">
    <subcellularLocation>
        <location evidence="1">Cytoplasm</location>
    </subcellularLocation>
</comment>
<comment type="similarity">
    <text evidence="1">Belongs to the DapB family.</text>
</comment>
<comment type="caution">
    <text evidence="2">Was originally thought to be a dihydrodipicolinate reductase (DHDPR), catalyzing the conversion of dihydrodipicolinate to tetrahydrodipicolinate. However, it was shown in E.coli that the substrate of the enzymatic reaction is not dihydrodipicolinate (DHDP) but in fact (2S,4S)-4-hydroxy-2,3,4,5-tetrahydrodipicolinic acid (HTPA), the product released by the DapA-catalyzed reaction.</text>
</comment>
<feature type="chain" id="PRO_1000117369" description="4-hydroxy-tetrahydrodipicolinate reductase">
    <location>
        <begin position="1"/>
        <end position="273"/>
    </location>
</feature>
<feature type="active site" description="Proton donor/acceptor" evidence="1">
    <location>
        <position position="159"/>
    </location>
</feature>
<feature type="active site" description="Proton donor" evidence="1">
    <location>
        <position position="163"/>
    </location>
</feature>
<feature type="binding site" evidence="1">
    <location>
        <begin position="12"/>
        <end position="17"/>
    </location>
    <ligand>
        <name>NAD(+)</name>
        <dbReference type="ChEBI" id="CHEBI:57540"/>
    </ligand>
</feature>
<feature type="binding site" evidence="1">
    <location>
        <position position="38"/>
    </location>
    <ligand>
        <name>NAD(+)</name>
        <dbReference type="ChEBI" id="CHEBI:57540"/>
    </ligand>
</feature>
<feature type="binding site" evidence="1">
    <location>
        <position position="39"/>
    </location>
    <ligand>
        <name>NADP(+)</name>
        <dbReference type="ChEBI" id="CHEBI:58349"/>
    </ligand>
</feature>
<feature type="binding site" evidence="1">
    <location>
        <begin position="102"/>
        <end position="104"/>
    </location>
    <ligand>
        <name>NAD(+)</name>
        <dbReference type="ChEBI" id="CHEBI:57540"/>
    </ligand>
</feature>
<feature type="binding site" evidence="1">
    <location>
        <begin position="126"/>
        <end position="129"/>
    </location>
    <ligand>
        <name>NAD(+)</name>
        <dbReference type="ChEBI" id="CHEBI:57540"/>
    </ligand>
</feature>
<feature type="binding site" evidence="1">
    <location>
        <position position="160"/>
    </location>
    <ligand>
        <name>(S)-2,3,4,5-tetrahydrodipicolinate</name>
        <dbReference type="ChEBI" id="CHEBI:16845"/>
    </ligand>
</feature>
<feature type="binding site" evidence="1">
    <location>
        <begin position="169"/>
        <end position="170"/>
    </location>
    <ligand>
        <name>(S)-2,3,4,5-tetrahydrodipicolinate</name>
        <dbReference type="ChEBI" id="CHEBI:16845"/>
    </ligand>
</feature>
<evidence type="ECO:0000255" key="1">
    <source>
        <dbReference type="HAMAP-Rule" id="MF_00102"/>
    </source>
</evidence>
<evidence type="ECO:0000305" key="2"/>
<gene>
    <name evidence="1" type="primary">dapB</name>
    <name type="ordered locus">ECIAI39_0032</name>
</gene>
<name>DAPB_ECO7I</name>
<accession>B7NHD5</accession>
<organism>
    <name type="scientific">Escherichia coli O7:K1 (strain IAI39 / ExPEC)</name>
    <dbReference type="NCBI Taxonomy" id="585057"/>
    <lineage>
        <taxon>Bacteria</taxon>
        <taxon>Pseudomonadati</taxon>
        <taxon>Pseudomonadota</taxon>
        <taxon>Gammaproteobacteria</taxon>
        <taxon>Enterobacterales</taxon>
        <taxon>Enterobacteriaceae</taxon>
        <taxon>Escherichia</taxon>
    </lineage>
</organism>
<keyword id="KW-0028">Amino-acid biosynthesis</keyword>
<keyword id="KW-0963">Cytoplasm</keyword>
<keyword id="KW-0220">Diaminopimelate biosynthesis</keyword>
<keyword id="KW-0457">Lysine biosynthesis</keyword>
<keyword id="KW-0520">NAD</keyword>
<keyword id="KW-0521">NADP</keyword>
<keyword id="KW-0560">Oxidoreductase</keyword>
<proteinExistence type="inferred from homology"/>
<reference key="1">
    <citation type="journal article" date="2009" name="PLoS Genet.">
        <title>Organised genome dynamics in the Escherichia coli species results in highly diverse adaptive paths.</title>
        <authorList>
            <person name="Touchon M."/>
            <person name="Hoede C."/>
            <person name="Tenaillon O."/>
            <person name="Barbe V."/>
            <person name="Baeriswyl S."/>
            <person name="Bidet P."/>
            <person name="Bingen E."/>
            <person name="Bonacorsi S."/>
            <person name="Bouchier C."/>
            <person name="Bouvet O."/>
            <person name="Calteau A."/>
            <person name="Chiapello H."/>
            <person name="Clermont O."/>
            <person name="Cruveiller S."/>
            <person name="Danchin A."/>
            <person name="Diard M."/>
            <person name="Dossat C."/>
            <person name="Karoui M.E."/>
            <person name="Frapy E."/>
            <person name="Garry L."/>
            <person name="Ghigo J.M."/>
            <person name="Gilles A.M."/>
            <person name="Johnson J."/>
            <person name="Le Bouguenec C."/>
            <person name="Lescat M."/>
            <person name="Mangenot S."/>
            <person name="Martinez-Jehanne V."/>
            <person name="Matic I."/>
            <person name="Nassif X."/>
            <person name="Oztas S."/>
            <person name="Petit M.A."/>
            <person name="Pichon C."/>
            <person name="Rouy Z."/>
            <person name="Ruf C.S."/>
            <person name="Schneider D."/>
            <person name="Tourret J."/>
            <person name="Vacherie B."/>
            <person name="Vallenet D."/>
            <person name="Medigue C."/>
            <person name="Rocha E.P.C."/>
            <person name="Denamur E."/>
        </authorList>
    </citation>
    <scope>NUCLEOTIDE SEQUENCE [LARGE SCALE GENOMIC DNA]</scope>
    <source>
        <strain>IAI39 / ExPEC</strain>
    </source>
</reference>
<dbReference type="EC" id="1.17.1.8" evidence="1"/>
<dbReference type="EMBL" id="CU928164">
    <property type="protein sequence ID" value="CAR16173.1"/>
    <property type="molecule type" value="Genomic_DNA"/>
</dbReference>
<dbReference type="RefSeq" id="WP_000543585.1">
    <property type="nucleotide sequence ID" value="NC_011750.1"/>
</dbReference>
<dbReference type="RefSeq" id="YP_002406080.1">
    <property type="nucleotide sequence ID" value="NC_011750.1"/>
</dbReference>
<dbReference type="SMR" id="B7NHD5"/>
<dbReference type="STRING" id="585057.ECIAI39_0032"/>
<dbReference type="KEGG" id="ect:ECIAI39_0032"/>
<dbReference type="PATRIC" id="fig|585057.6.peg.33"/>
<dbReference type="HOGENOM" id="CLU_047479_2_1_6"/>
<dbReference type="UniPathway" id="UPA00034">
    <property type="reaction ID" value="UER00018"/>
</dbReference>
<dbReference type="Proteomes" id="UP000000749">
    <property type="component" value="Chromosome"/>
</dbReference>
<dbReference type="GO" id="GO:0005829">
    <property type="term" value="C:cytosol"/>
    <property type="evidence" value="ECO:0007669"/>
    <property type="project" value="TreeGrafter"/>
</dbReference>
<dbReference type="GO" id="GO:0008839">
    <property type="term" value="F:4-hydroxy-tetrahydrodipicolinate reductase"/>
    <property type="evidence" value="ECO:0007669"/>
    <property type="project" value="UniProtKB-EC"/>
</dbReference>
<dbReference type="GO" id="GO:0051287">
    <property type="term" value="F:NAD binding"/>
    <property type="evidence" value="ECO:0007669"/>
    <property type="project" value="UniProtKB-UniRule"/>
</dbReference>
<dbReference type="GO" id="GO:0050661">
    <property type="term" value="F:NADP binding"/>
    <property type="evidence" value="ECO:0007669"/>
    <property type="project" value="UniProtKB-UniRule"/>
</dbReference>
<dbReference type="GO" id="GO:0016726">
    <property type="term" value="F:oxidoreductase activity, acting on CH or CH2 groups, NAD or NADP as acceptor"/>
    <property type="evidence" value="ECO:0007669"/>
    <property type="project" value="UniProtKB-UniRule"/>
</dbReference>
<dbReference type="GO" id="GO:0019877">
    <property type="term" value="P:diaminopimelate biosynthetic process"/>
    <property type="evidence" value="ECO:0007669"/>
    <property type="project" value="UniProtKB-UniRule"/>
</dbReference>
<dbReference type="GO" id="GO:0009089">
    <property type="term" value="P:lysine biosynthetic process via diaminopimelate"/>
    <property type="evidence" value="ECO:0007669"/>
    <property type="project" value="UniProtKB-UniRule"/>
</dbReference>
<dbReference type="CDD" id="cd02274">
    <property type="entry name" value="DHDPR_N"/>
    <property type="match status" value="1"/>
</dbReference>
<dbReference type="FunFam" id="3.30.360.10:FF:000004">
    <property type="entry name" value="4-hydroxy-tetrahydrodipicolinate reductase"/>
    <property type="match status" value="1"/>
</dbReference>
<dbReference type="FunFam" id="3.40.50.720:FF:000048">
    <property type="entry name" value="4-hydroxy-tetrahydrodipicolinate reductase"/>
    <property type="match status" value="1"/>
</dbReference>
<dbReference type="Gene3D" id="3.30.360.10">
    <property type="entry name" value="Dihydrodipicolinate Reductase, domain 2"/>
    <property type="match status" value="1"/>
</dbReference>
<dbReference type="Gene3D" id="3.40.50.720">
    <property type="entry name" value="NAD(P)-binding Rossmann-like Domain"/>
    <property type="match status" value="1"/>
</dbReference>
<dbReference type="HAMAP" id="MF_00102">
    <property type="entry name" value="DapB"/>
    <property type="match status" value="1"/>
</dbReference>
<dbReference type="InterPro" id="IPR022663">
    <property type="entry name" value="DapB_C"/>
</dbReference>
<dbReference type="InterPro" id="IPR000846">
    <property type="entry name" value="DapB_N"/>
</dbReference>
<dbReference type="InterPro" id="IPR022664">
    <property type="entry name" value="DapB_N_CS"/>
</dbReference>
<dbReference type="InterPro" id="IPR023940">
    <property type="entry name" value="DHDPR_bac"/>
</dbReference>
<dbReference type="InterPro" id="IPR036291">
    <property type="entry name" value="NAD(P)-bd_dom_sf"/>
</dbReference>
<dbReference type="NCBIfam" id="TIGR00036">
    <property type="entry name" value="dapB"/>
    <property type="match status" value="1"/>
</dbReference>
<dbReference type="PANTHER" id="PTHR20836:SF0">
    <property type="entry name" value="4-HYDROXY-TETRAHYDRODIPICOLINATE REDUCTASE 1, CHLOROPLASTIC-RELATED"/>
    <property type="match status" value="1"/>
</dbReference>
<dbReference type="PANTHER" id="PTHR20836">
    <property type="entry name" value="DIHYDRODIPICOLINATE REDUCTASE"/>
    <property type="match status" value="1"/>
</dbReference>
<dbReference type="Pfam" id="PF05173">
    <property type="entry name" value="DapB_C"/>
    <property type="match status" value="1"/>
</dbReference>
<dbReference type="Pfam" id="PF01113">
    <property type="entry name" value="DapB_N"/>
    <property type="match status" value="1"/>
</dbReference>
<dbReference type="PIRSF" id="PIRSF000161">
    <property type="entry name" value="DHPR"/>
    <property type="match status" value="1"/>
</dbReference>
<dbReference type="SUPFAM" id="SSF55347">
    <property type="entry name" value="Glyceraldehyde-3-phosphate dehydrogenase-like, C-terminal domain"/>
    <property type="match status" value="1"/>
</dbReference>
<dbReference type="SUPFAM" id="SSF51735">
    <property type="entry name" value="NAD(P)-binding Rossmann-fold domains"/>
    <property type="match status" value="1"/>
</dbReference>
<dbReference type="PROSITE" id="PS01298">
    <property type="entry name" value="DAPB"/>
    <property type="match status" value="1"/>
</dbReference>